<organism>
    <name type="scientific">Ateles geoffroyi</name>
    <name type="common">Black-handed spider monkey</name>
    <name type="synonym">Geoffroy's spider monkey</name>
    <dbReference type="NCBI Taxonomy" id="9509"/>
    <lineage>
        <taxon>Eukaryota</taxon>
        <taxon>Metazoa</taxon>
        <taxon>Chordata</taxon>
        <taxon>Craniata</taxon>
        <taxon>Vertebrata</taxon>
        <taxon>Euteleostomi</taxon>
        <taxon>Mammalia</taxon>
        <taxon>Eutheria</taxon>
        <taxon>Euarchontoglires</taxon>
        <taxon>Primates</taxon>
        <taxon>Haplorrhini</taxon>
        <taxon>Platyrrhini</taxon>
        <taxon>Atelidae</taxon>
        <taxon>Atelinae</taxon>
        <taxon>Ateles</taxon>
    </lineage>
</organism>
<gene>
    <name type="primary">MET</name>
</gene>
<dbReference type="EC" id="2.7.10.1"/>
<dbReference type="EMBL" id="DP000177">
    <property type="protein sequence ID" value="ABI75269.1"/>
    <property type="molecule type" value="Genomic_DNA"/>
</dbReference>
<dbReference type="SMR" id="Q09YL1"/>
<dbReference type="GlyCosmos" id="Q09YL1">
    <property type="glycosylation" value="10 sites, No reported glycans"/>
</dbReference>
<dbReference type="OrthoDB" id="9985181at2759"/>
<dbReference type="GO" id="GO:0005886">
    <property type="term" value="C:plasma membrane"/>
    <property type="evidence" value="ECO:0007669"/>
    <property type="project" value="TreeGrafter"/>
</dbReference>
<dbReference type="GO" id="GO:0002116">
    <property type="term" value="C:semaphorin receptor complex"/>
    <property type="evidence" value="ECO:0007669"/>
    <property type="project" value="TreeGrafter"/>
</dbReference>
<dbReference type="GO" id="GO:0005524">
    <property type="term" value="F:ATP binding"/>
    <property type="evidence" value="ECO:0007669"/>
    <property type="project" value="UniProtKB-KW"/>
</dbReference>
<dbReference type="GO" id="GO:0017154">
    <property type="term" value="F:semaphorin receptor activity"/>
    <property type="evidence" value="ECO:0007669"/>
    <property type="project" value="InterPro"/>
</dbReference>
<dbReference type="GO" id="GO:0004714">
    <property type="term" value="F:transmembrane receptor protein tyrosine kinase activity"/>
    <property type="evidence" value="ECO:0007669"/>
    <property type="project" value="UniProtKB-EC"/>
</dbReference>
<dbReference type="GO" id="GO:0007169">
    <property type="term" value="P:cell surface receptor protein tyrosine kinase signaling pathway"/>
    <property type="evidence" value="ECO:0007669"/>
    <property type="project" value="InterPro"/>
</dbReference>
<dbReference type="GO" id="GO:0050918">
    <property type="term" value="P:positive chemotaxis"/>
    <property type="evidence" value="ECO:0000250"/>
    <property type="project" value="UniProtKB"/>
</dbReference>
<dbReference type="GO" id="GO:2001028">
    <property type="term" value="P:positive regulation of endothelial cell chemotaxis"/>
    <property type="evidence" value="ECO:0000250"/>
    <property type="project" value="UniProtKB"/>
</dbReference>
<dbReference type="GO" id="GO:0071526">
    <property type="term" value="P:semaphorin-plexin signaling pathway"/>
    <property type="evidence" value="ECO:0000250"/>
    <property type="project" value="UniProtKB"/>
</dbReference>
<dbReference type="CDD" id="cd00603">
    <property type="entry name" value="IPT_PCSR"/>
    <property type="match status" value="1"/>
</dbReference>
<dbReference type="CDD" id="cd01180">
    <property type="entry name" value="IPT_plexin_repeat1"/>
    <property type="match status" value="1"/>
</dbReference>
<dbReference type="CDD" id="cd01179">
    <property type="entry name" value="IPT_plexin_repeat2"/>
    <property type="match status" value="1"/>
</dbReference>
<dbReference type="CDD" id="cd05058">
    <property type="entry name" value="PTKc_Met_Ron"/>
    <property type="match status" value="1"/>
</dbReference>
<dbReference type="FunFam" id="1.10.510.10:FF:000093">
    <property type="entry name" value="Hepatocyte growth factor receptor"/>
    <property type="match status" value="1"/>
</dbReference>
<dbReference type="FunFam" id="2.130.10.10:FF:000088">
    <property type="entry name" value="Hepatocyte growth factor receptor"/>
    <property type="match status" value="1"/>
</dbReference>
<dbReference type="FunFam" id="2.60.40.10:FF:000213">
    <property type="entry name" value="Hepatocyte growth factor receptor"/>
    <property type="match status" value="1"/>
</dbReference>
<dbReference type="FunFam" id="2.60.40.10:FF:000400">
    <property type="entry name" value="Hepatocyte growth factor receptor"/>
    <property type="match status" value="1"/>
</dbReference>
<dbReference type="FunFam" id="2.60.40.10:FF:002708">
    <property type="entry name" value="Hepatocyte growth factor receptor"/>
    <property type="match status" value="1"/>
</dbReference>
<dbReference type="FunFam" id="3.30.200.20:FF:000188">
    <property type="entry name" value="Hepatocyte growth factor receptor"/>
    <property type="match status" value="1"/>
</dbReference>
<dbReference type="FunFam" id="3.30.1680.10:FF:000006">
    <property type="entry name" value="Macrophage-stimulating 1 receptor b"/>
    <property type="match status" value="1"/>
</dbReference>
<dbReference type="Gene3D" id="2.60.40.10">
    <property type="entry name" value="Immunoglobulins"/>
    <property type="match status" value="3"/>
</dbReference>
<dbReference type="Gene3D" id="3.30.200.20">
    <property type="entry name" value="Phosphorylase Kinase, domain 1"/>
    <property type="match status" value="1"/>
</dbReference>
<dbReference type="Gene3D" id="1.10.510.10">
    <property type="entry name" value="Transferase(Phosphotransferase) domain 1"/>
    <property type="match status" value="1"/>
</dbReference>
<dbReference type="Gene3D" id="2.130.10.10">
    <property type="entry name" value="YVTN repeat-like/Quinoprotein amine dehydrogenase"/>
    <property type="match status" value="1"/>
</dbReference>
<dbReference type="InterPro" id="IPR013783">
    <property type="entry name" value="Ig-like_fold"/>
</dbReference>
<dbReference type="InterPro" id="IPR014756">
    <property type="entry name" value="Ig_E-set"/>
</dbReference>
<dbReference type="InterPro" id="IPR002909">
    <property type="entry name" value="IPT_dom"/>
</dbReference>
<dbReference type="InterPro" id="IPR011009">
    <property type="entry name" value="Kinase-like_dom_sf"/>
</dbReference>
<dbReference type="InterPro" id="IPR031148">
    <property type="entry name" value="Plexin"/>
</dbReference>
<dbReference type="InterPro" id="IPR002165">
    <property type="entry name" value="Plexin_repeat"/>
</dbReference>
<dbReference type="InterPro" id="IPR000719">
    <property type="entry name" value="Prot_kinase_dom"/>
</dbReference>
<dbReference type="InterPro" id="IPR017441">
    <property type="entry name" value="Protein_kinase_ATP_BS"/>
</dbReference>
<dbReference type="InterPro" id="IPR016201">
    <property type="entry name" value="PSI"/>
</dbReference>
<dbReference type="InterPro" id="IPR001627">
    <property type="entry name" value="Semap_dom"/>
</dbReference>
<dbReference type="InterPro" id="IPR036352">
    <property type="entry name" value="Semap_dom_sf"/>
</dbReference>
<dbReference type="InterPro" id="IPR001245">
    <property type="entry name" value="Ser-Thr/Tyr_kinase_cat_dom"/>
</dbReference>
<dbReference type="InterPro" id="IPR008266">
    <property type="entry name" value="Tyr_kinase_AS"/>
</dbReference>
<dbReference type="InterPro" id="IPR020635">
    <property type="entry name" value="Tyr_kinase_cat_dom"/>
</dbReference>
<dbReference type="InterPro" id="IPR016244">
    <property type="entry name" value="Tyr_kinase_HGF/MSP_rcpt"/>
</dbReference>
<dbReference type="InterPro" id="IPR015943">
    <property type="entry name" value="WD40/YVTN_repeat-like_dom_sf"/>
</dbReference>
<dbReference type="PANTHER" id="PTHR22625:SF61">
    <property type="entry name" value="HEPATOCYTE GROWTH FACTOR RECEPTOR"/>
    <property type="match status" value="1"/>
</dbReference>
<dbReference type="PANTHER" id="PTHR22625">
    <property type="entry name" value="PLEXIN"/>
    <property type="match status" value="1"/>
</dbReference>
<dbReference type="Pfam" id="PF07714">
    <property type="entry name" value="PK_Tyr_Ser-Thr"/>
    <property type="match status" value="1"/>
</dbReference>
<dbReference type="Pfam" id="PF01437">
    <property type="entry name" value="PSI"/>
    <property type="match status" value="1"/>
</dbReference>
<dbReference type="Pfam" id="PF01403">
    <property type="entry name" value="Sema"/>
    <property type="match status" value="1"/>
</dbReference>
<dbReference type="Pfam" id="PF01833">
    <property type="entry name" value="TIG"/>
    <property type="match status" value="3"/>
</dbReference>
<dbReference type="PIRSF" id="PIRSF000617">
    <property type="entry name" value="TyrPK_HGF-R"/>
    <property type="match status" value="1"/>
</dbReference>
<dbReference type="PRINTS" id="PR00109">
    <property type="entry name" value="TYRKINASE"/>
</dbReference>
<dbReference type="SMART" id="SM00429">
    <property type="entry name" value="IPT"/>
    <property type="match status" value="4"/>
</dbReference>
<dbReference type="SMART" id="SM00423">
    <property type="entry name" value="PSI"/>
    <property type="match status" value="1"/>
</dbReference>
<dbReference type="SMART" id="SM00630">
    <property type="entry name" value="Sema"/>
    <property type="match status" value="1"/>
</dbReference>
<dbReference type="SMART" id="SM00219">
    <property type="entry name" value="TyrKc"/>
    <property type="match status" value="1"/>
</dbReference>
<dbReference type="SUPFAM" id="SSF81296">
    <property type="entry name" value="E set domains"/>
    <property type="match status" value="3"/>
</dbReference>
<dbReference type="SUPFAM" id="SSF103575">
    <property type="entry name" value="Plexin repeat"/>
    <property type="match status" value="1"/>
</dbReference>
<dbReference type="SUPFAM" id="SSF56112">
    <property type="entry name" value="Protein kinase-like (PK-like)"/>
    <property type="match status" value="1"/>
</dbReference>
<dbReference type="SUPFAM" id="SSF101912">
    <property type="entry name" value="Sema domain"/>
    <property type="match status" value="1"/>
</dbReference>
<dbReference type="PROSITE" id="PS00107">
    <property type="entry name" value="PROTEIN_KINASE_ATP"/>
    <property type="match status" value="1"/>
</dbReference>
<dbReference type="PROSITE" id="PS50011">
    <property type="entry name" value="PROTEIN_KINASE_DOM"/>
    <property type="match status" value="1"/>
</dbReference>
<dbReference type="PROSITE" id="PS00109">
    <property type="entry name" value="PROTEIN_KINASE_TYR"/>
    <property type="match status" value="1"/>
</dbReference>
<dbReference type="PROSITE" id="PS51004">
    <property type="entry name" value="SEMA"/>
    <property type="match status" value="1"/>
</dbReference>
<evidence type="ECO:0000250" key="1"/>
<evidence type="ECO:0000250" key="2">
    <source>
        <dbReference type="UniProtKB" id="P08581"/>
    </source>
</evidence>
<evidence type="ECO:0000250" key="3">
    <source>
        <dbReference type="UniProtKB" id="P16056"/>
    </source>
</evidence>
<evidence type="ECO:0000255" key="4"/>
<evidence type="ECO:0000255" key="5">
    <source>
        <dbReference type="PROSITE-ProRule" id="PRU00159"/>
    </source>
</evidence>
<evidence type="ECO:0000255" key="6">
    <source>
        <dbReference type="PROSITE-ProRule" id="PRU00352"/>
    </source>
</evidence>
<evidence type="ECO:0000255" key="7">
    <source>
        <dbReference type="PROSITE-ProRule" id="PRU10028"/>
    </source>
</evidence>
<accession>Q09YL1</accession>
<sequence>MKAPTVLTPGILVLLFILVQRSNGECKEALTKSEMNVNMKYQLPNFTAETPIQNVVLHEHHIFLGATNYIYVLNEEDLQKVAEHRTGPVLEHPDCFPCQDCSSKANLSGGVWKDNINMALVVDTYYDDQLISCGSVNRGTCQRHVFPHNHTADIQSEVHCIFSPQTEEPSQCPDCVVSALGTKVLLSVKDRFLNFFVGNTINSSYFPDHSLHSISVRRLKETKDGFMFLTDQSYVDVLPEFRDSYPIKYVHAFESNNFIYFLTVQRETLNAQTFHTRIIRFCSINSALHSYMEMPLECILTEKRKKRSTKKEVFNILQAAYVSKPGAQLARQIGASLNDDILFGVFAQSKPDSAEPMDRSAVCAFPIKYVNDFFNKIVNKNNVRCLQHFYGPNHEHCFNRTFQRNLLGCEARRDEYRTEFTTALQRIDLFAGQFNKVLLTSISTFVKGDLTIANLGTSEGRFIQIVVSRSVPSTPHVNFLLDSHPVSPEVIVEHPLNQNGYTLVVTGKKITKIPLNGLGCRHFQSCSQCLSAPSFVQCGWCHDKCVRSEECSSGTWTQETCLPTIYRVFPTSAPLEGGTRLTICGWDFGFRRNNKFDLKKTRVLLGNESCTLTLSESTMNTLKCTVGPAMNEHFNMSIIISNTHGTTQYSTFSYVDPIITSISPRYGPMSGGTLLTLTGNYLNSGNSRHISIGGKTCTLKSVSNSILECYTPAQTISTEFPVKLKIDLANRETSIFSYREDPIVYEIHPTKSFISGGSTITGIGKNLNSVSVPRMVINLHEARRNFTVACQHRSNSEIICCTTPSLQQLNLQLPLKTKAFFMLDGILSKYFDLIYVHNPVFKPFEKPVMISMGNENVLEIKGNDIDPEAVKGEVLKVGNKSCENIHLHSEAVLCTVPSDLLKLNSELNIEWKQAISSTVLGKVIVQPDQNFTGLIAGVVSISIALLLLLGLFLWLKKRKQIKDLGSELVRYDARVHTPHLDRLVSARSVSPTTEMVSNESVDYRATFPEDQFPNSSQNGSCRQVQYPLTDMSPILTSGDSDISSPLLQNTVHIDLSALNPELVQAVQHVVIGPSSLIVHFNEVIGRGHFGCVYHGTLLDNDGKKIHCAVKSLNRITDIGEVSQFLTEGIIMKDFSHPNVLSLLGICLRSEGSPLVVLPYMKHGDLRNFIRNETHNPTVKDLIGFGLQVAKGMKYLASKKFVHRDLAARNCMLDEKFTVKVADFGLARDMYDKEYYSVHNKTGAKLPVKWMALESLQTQKFTTKSDVWSFGVLLWELMTRGAPPYPDVNTFDITVYLLQGRRLLQPEYCPDPLYEVMLKCWHPKAEMRPSFSELVSRISAIFSAFIGEHYVHVNATYVNVKCVAPYPSLLSSQDNADGEVDT</sequence>
<feature type="signal peptide" evidence="4">
    <location>
        <begin position="1"/>
        <end position="24"/>
    </location>
</feature>
<feature type="chain" id="PRO_0000260418" description="Hepatocyte growth factor receptor">
    <location>
        <begin position="25"/>
        <end position="1381"/>
    </location>
</feature>
<feature type="topological domain" description="Extracellular" evidence="4">
    <location>
        <begin position="25"/>
        <end position="932"/>
    </location>
</feature>
<feature type="transmembrane region" description="Helical" evidence="4">
    <location>
        <begin position="933"/>
        <end position="955"/>
    </location>
</feature>
<feature type="topological domain" description="Cytoplasmic" evidence="4">
    <location>
        <begin position="956"/>
        <end position="1381"/>
    </location>
</feature>
<feature type="domain" description="Sema" evidence="6">
    <location>
        <begin position="27"/>
        <end position="515"/>
    </location>
</feature>
<feature type="domain" description="IPT/TIG 1">
    <location>
        <begin position="563"/>
        <end position="655"/>
    </location>
</feature>
<feature type="domain" description="IPT/TIG 2">
    <location>
        <begin position="657"/>
        <end position="739"/>
    </location>
</feature>
<feature type="domain" description="IPT/TIG 3">
    <location>
        <begin position="742"/>
        <end position="836"/>
    </location>
</feature>
<feature type="domain" description="Protein kinase" evidence="5">
    <location>
        <begin position="1078"/>
        <end position="1345"/>
    </location>
</feature>
<feature type="region of interest" description="Interaction with RANBP9" evidence="1">
    <location>
        <begin position="1212"/>
        <end position="1381"/>
    </location>
</feature>
<feature type="region of interest" description="Interaction with MUC20" evidence="1">
    <location>
        <begin position="1320"/>
        <end position="1359"/>
    </location>
</feature>
<feature type="active site" description="Proton acceptor" evidence="5 7">
    <location>
        <position position="1204"/>
    </location>
</feature>
<feature type="binding site" evidence="5">
    <location>
        <begin position="1084"/>
        <end position="1092"/>
    </location>
    <ligand>
        <name>ATP</name>
        <dbReference type="ChEBI" id="CHEBI:30616"/>
    </ligand>
</feature>
<feature type="binding site" evidence="5">
    <location>
        <position position="1110"/>
    </location>
    <ligand>
        <name>ATP</name>
        <dbReference type="ChEBI" id="CHEBI:30616"/>
    </ligand>
</feature>
<feature type="site" description="Cleavage" evidence="4">
    <location>
        <begin position="307"/>
        <end position="308"/>
    </location>
</feature>
<feature type="modified residue" description="Phosphoserine" evidence="2">
    <location>
        <position position="966"/>
    </location>
</feature>
<feature type="modified residue" description="Phosphothreonine" evidence="2">
    <location>
        <position position="977"/>
    </location>
</feature>
<feature type="modified residue" description="Phosphoserine" evidence="2">
    <location>
        <position position="990"/>
    </location>
</feature>
<feature type="modified residue" description="Phosphoserine" evidence="2">
    <location>
        <position position="997"/>
    </location>
</feature>
<feature type="modified residue" description="Phosphoserine" evidence="2">
    <location>
        <position position="1000"/>
    </location>
</feature>
<feature type="modified residue" description="Phosphotyrosine" evidence="2">
    <location>
        <position position="1003"/>
    </location>
</feature>
<feature type="modified residue" description="Phosphotyrosine" evidence="2">
    <location>
        <position position="1230"/>
    </location>
</feature>
<feature type="modified residue" description="Phosphotyrosine; by autocatalysis" evidence="2">
    <location>
        <position position="1234"/>
    </location>
</feature>
<feature type="modified residue" description="Phosphotyrosine; by autocatalysis" evidence="2">
    <location>
        <position position="1235"/>
    </location>
</feature>
<feature type="modified residue" description="Phosphothreonine" evidence="2">
    <location>
        <position position="1289"/>
    </location>
</feature>
<feature type="modified residue" description="Phosphotyrosine; by autocatalysis" evidence="2">
    <location>
        <position position="1349"/>
    </location>
</feature>
<feature type="modified residue" description="Phosphotyrosine; by autocatalysis" evidence="2">
    <location>
        <position position="1356"/>
    </location>
</feature>
<feature type="modified residue" description="Phosphotyrosine" evidence="2">
    <location>
        <position position="1365"/>
    </location>
</feature>
<feature type="glycosylation site" description="N-linked (GlcNAc...) asparagine" evidence="4">
    <location>
        <position position="45"/>
    </location>
</feature>
<feature type="glycosylation site" description="N-linked (GlcNAc...) asparagine" evidence="4">
    <location>
        <position position="106"/>
    </location>
</feature>
<feature type="glycosylation site" description="N-linked (GlcNAc...) asparagine" evidence="4">
    <location>
        <position position="149"/>
    </location>
</feature>
<feature type="glycosylation site" description="N-linked (GlcNAc...) asparagine" evidence="4">
    <location>
        <position position="202"/>
    </location>
</feature>
<feature type="glycosylation site" description="N-linked (GlcNAc...) asparagine" evidence="4">
    <location>
        <position position="399"/>
    </location>
</feature>
<feature type="glycosylation site" description="O-linked (Man) threonine" evidence="2">
    <location>
        <position position="582"/>
    </location>
</feature>
<feature type="glycosylation site" description="N-linked (GlcNAc...) asparagine" evidence="4">
    <location>
        <position position="607"/>
    </location>
</feature>
<feature type="glycosylation site" description="N-linked (GlcNAc...) asparagine" evidence="4">
    <location>
        <position position="635"/>
    </location>
</feature>
<feature type="glycosylation site" description="O-linked (Man) threonine" evidence="2">
    <location>
        <position position="676"/>
    </location>
</feature>
<feature type="glycosylation site" description="O-linked (Man) threonine" evidence="2">
    <location>
        <position position="761"/>
    </location>
</feature>
<feature type="glycosylation site" description="N-linked (GlcNAc...) asparagine" evidence="4">
    <location>
        <position position="785"/>
    </location>
</feature>
<feature type="glycosylation site" description="N-linked (GlcNAc...) asparagine" evidence="4">
    <location>
        <position position="879"/>
    </location>
</feature>
<feature type="glycosylation site" description="N-linked (GlcNAc...) asparagine" evidence="4">
    <location>
        <position position="930"/>
    </location>
</feature>
<feature type="disulfide bond" evidence="6">
    <location>
        <begin position="95"/>
        <end position="101"/>
    </location>
</feature>
<feature type="disulfide bond" evidence="6">
    <location>
        <begin position="98"/>
        <end position="160"/>
    </location>
</feature>
<feature type="disulfide bond" evidence="6">
    <location>
        <begin position="133"/>
        <end position="141"/>
    </location>
</feature>
<feature type="disulfide bond" evidence="6">
    <location>
        <begin position="172"/>
        <end position="175"/>
    </location>
</feature>
<feature type="disulfide bond" evidence="6">
    <location>
        <begin position="298"/>
        <end position="363"/>
    </location>
</feature>
<feature type="disulfide bond" evidence="6">
    <location>
        <begin position="385"/>
        <end position="397"/>
    </location>
</feature>
<feature type="disulfide bond" evidence="6">
    <location>
        <begin position="520"/>
        <end position="538"/>
    </location>
</feature>
<feature type="disulfide bond" evidence="6">
    <location>
        <begin position="526"/>
        <end position="561"/>
    </location>
</feature>
<feature type="disulfide bond" evidence="6">
    <location>
        <begin position="529"/>
        <end position="545"/>
    </location>
</feature>
<feature type="disulfide bond" evidence="6">
    <location>
        <begin position="541"/>
        <end position="551"/>
    </location>
</feature>
<name>MET_ATEGE</name>
<protein>
    <recommendedName>
        <fullName>Hepatocyte growth factor receptor</fullName>
        <shortName>HGF receptor</shortName>
        <ecNumber>2.7.10.1</ecNumber>
    </recommendedName>
    <alternativeName>
        <fullName>HGF/SF receptor</fullName>
    </alternativeName>
    <alternativeName>
        <fullName>Proto-oncogene c-Met</fullName>
    </alternativeName>
    <alternativeName>
        <fullName>Scatter factor receptor</fullName>
        <shortName>SF receptor</shortName>
    </alternativeName>
    <alternativeName>
        <fullName>Tyrosine-protein kinase Met</fullName>
    </alternativeName>
</protein>
<reference key="1">
    <citation type="submission" date="2006-09" db="EMBL/GenBank/DDBJ databases">
        <title>NISC comparative sequencing initiative.</title>
        <authorList>
            <person name="Antonellis A."/>
            <person name="Ayele K."/>
            <person name="Benjamin B."/>
            <person name="Blakesley R.W."/>
            <person name="Boakye A."/>
            <person name="Bouffard G.G."/>
            <person name="Brinkley C."/>
            <person name="Brooks S."/>
            <person name="Chu G."/>
            <person name="Coleman H."/>
            <person name="Engle J."/>
            <person name="Gestole M."/>
            <person name="Greene A."/>
            <person name="Guan X."/>
            <person name="Gupta J."/>
            <person name="Haghighi P."/>
            <person name="Han J."/>
            <person name="Hansen N."/>
            <person name="Ho S.-L."/>
            <person name="Hu P."/>
            <person name="Hunter G."/>
            <person name="Hurle B."/>
            <person name="Idol J.R."/>
            <person name="Kwong P."/>
            <person name="Laric P."/>
            <person name="Larson S."/>
            <person name="Lee-Lin S.-Q."/>
            <person name="Legaspi R."/>
            <person name="Madden M."/>
            <person name="Maduro Q.L."/>
            <person name="Maduro V.B."/>
            <person name="Margulies E.H."/>
            <person name="Masiello C."/>
            <person name="Maskeri B."/>
            <person name="McDowell J."/>
            <person name="Mojidi H.A."/>
            <person name="Mullikin J.C."/>
            <person name="Oestreicher J.S."/>
            <person name="Park M."/>
            <person name="Portnoy M.E."/>
            <person name="Prasad A."/>
            <person name="Puri O."/>
            <person name="Reddix-Dugue N."/>
            <person name="Schandler K."/>
            <person name="Schueler M.G."/>
            <person name="Sison C."/>
            <person name="Stantripop S."/>
            <person name="Stephen E."/>
            <person name="Taye A."/>
            <person name="Thomas J.W."/>
            <person name="Thomas P.J."/>
            <person name="Tsipouri V."/>
            <person name="Ung L."/>
            <person name="Vogt J.L."/>
            <person name="Wetherby K.D."/>
            <person name="Young A."/>
            <person name="Green E.D."/>
        </authorList>
    </citation>
    <scope>NUCLEOTIDE SEQUENCE [LARGE SCALE GENOMIC DNA]</scope>
</reference>
<proteinExistence type="inferred from homology"/>
<comment type="function">
    <text evidence="1">Receptor tyrosine kinase that transduces signals from the extracellular matrix into the cytoplasm by binding to hepatocyte growth factor/HGF ligand. Regulates many physiological processes including proliferation, scattering, morphogenesis and survival. Ligand binding at the cell surface induces autophosphorylation of MET on its intracellular domain that provides docking sites for downstream signaling molecules. Following activation by ligand, interacts with the PI3-kinase subunit PIK3R1, PLCG1, SRC, GRB2, STAT3 or the adapter GAB1. Recruitment of these downstream effectors by MET leads to the activation of several signaling cascades including the RAS-ERK, PI3 kinase-AKT, or PLCgamma-PKC. The RAS-ERK activation is associated with the morphogenetic effects while PI3K/AKT coordinates prosurvival effects. During embryonic development, MET signaling plays a role in gastrulation, development and migration of muscles and neuronal precursors, angiogenesis and kidney formation. In adults, participates in wound healing as well as organ regeneration and tissue remodeling. Also promotes differentiation and proliferation of hematopoietic cells (By similarity).</text>
</comment>
<comment type="catalytic activity">
    <reaction evidence="7">
        <text>L-tyrosyl-[protein] + ATP = O-phospho-L-tyrosyl-[protein] + ADP + H(+)</text>
        <dbReference type="Rhea" id="RHEA:10596"/>
        <dbReference type="Rhea" id="RHEA-COMP:10136"/>
        <dbReference type="Rhea" id="RHEA-COMP:20101"/>
        <dbReference type="ChEBI" id="CHEBI:15378"/>
        <dbReference type="ChEBI" id="CHEBI:30616"/>
        <dbReference type="ChEBI" id="CHEBI:46858"/>
        <dbReference type="ChEBI" id="CHEBI:61978"/>
        <dbReference type="ChEBI" id="CHEBI:456216"/>
        <dbReference type="EC" id="2.7.10.1"/>
    </reaction>
</comment>
<comment type="activity regulation">
    <text evidence="1">In its inactive state, the C-terminal tail interacts with the catalytic domain and inhibits the kinase activity. Upon ligand binding, the C-terminal tail is displaced and becomes phosphorylated, thus increasing the kinase activity (By similarity).</text>
</comment>
<comment type="subunit">
    <text evidence="2 3">Heterodimer made of an alpha chain (50 kDa) and a beta chain (145 kDa) which are disulfide linked. Binds PLXNB1. Interacts when phosphorylated with downstream effectors including STAT3, PIK3R1, SRC, PCLG1, GRB2 and GAB1. Interacts with SPSB1, SPSB2 and SPSB4. Interacts with INPP5D/SHIP1. When phosphorylated at Tyr-1356, interacts with INPPL1/SHIP2. Interacts with RANBP9 and RANBP10, as well as SPSB1, SPSB2, SPSB3 and SPSB4. SPSB1 binding occurs in the presence and in the absence of HGF, however HGF treatment has a positive effect on this interaction. Interacts with MUC20; prevents interaction with GRB2 and suppresses hepatocyte growth factor-induced cell proliferation. Interacts with GRB10 (By similarity). Interacts with PTPN1 and PTPN2 (By similarity). Interacts with tensin TNS3 (By similarity). Interacts (when phosphorylated) with tensin TNS4 (via SH2 domain); the interaction increases MET protein stability by inhibiting MET endocytosis and subsequent lysosomal degradation (By similarity).</text>
</comment>
<comment type="subcellular location">
    <subcellularLocation>
        <location evidence="1">Membrane</location>
        <topology evidence="1">Single-pass type I membrane protein</topology>
    </subcellularLocation>
</comment>
<comment type="domain">
    <text evidence="1">The kinase domain is involved in SPSB1 binding.</text>
</comment>
<comment type="domain">
    <text evidence="1">The beta-propeller Sema domain mediates binding to HGF.</text>
</comment>
<comment type="PTM">
    <text evidence="2">Autophosphorylated in response to ligand binding on Tyr-1234 and Tyr-1235 in the kinase domain leading to further phosphorylation of Tyr-1349 and Tyr-1356 in the C-terminal multifunctional docking site. Dephosphorylated by PTPRJ at Tyr-1349 and Tyr-1365. Dephosphorylated by PTPN1 and PTPN2 (By similarity).</text>
</comment>
<comment type="PTM">
    <text evidence="2">Ubiquitinated. Ubiquitination by CBL regulates the receptor stability and activity through proteasomal degradation (By similarity).</text>
</comment>
<comment type="PTM">
    <text evidence="2">O-mannosylation of IPT/TIG domains by TMEM260 is required for protein maturation. O-mannosylated residues are composed of single mannose glycans that are not elongated or modified.</text>
</comment>
<comment type="similarity">
    <text evidence="5">Belongs to the protein kinase superfamily. Tyr protein kinase family.</text>
</comment>
<keyword id="KW-0067">ATP-binding</keyword>
<keyword id="KW-1015">Disulfide bond</keyword>
<keyword id="KW-0325">Glycoprotein</keyword>
<keyword id="KW-0418">Kinase</keyword>
<keyword id="KW-0472">Membrane</keyword>
<keyword id="KW-0547">Nucleotide-binding</keyword>
<keyword id="KW-0597">Phosphoprotein</keyword>
<keyword id="KW-0656">Proto-oncogene</keyword>
<keyword id="KW-0675">Receptor</keyword>
<keyword id="KW-0677">Repeat</keyword>
<keyword id="KW-0732">Signal</keyword>
<keyword id="KW-0808">Transferase</keyword>
<keyword id="KW-0812">Transmembrane</keyword>
<keyword id="KW-1133">Transmembrane helix</keyword>
<keyword id="KW-0829">Tyrosine-protein kinase</keyword>
<keyword id="KW-0832">Ubl conjugation</keyword>